<gene>
    <name evidence="1" type="primary">rplI</name>
    <name evidence="1" type="synonym">rpl9</name>
    <name type="ordered locus">cce_4398</name>
</gene>
<name>RL9_CROS5</name>
<organism>
    <name type="scientific">Crocosphaera subtropica (strain ATCC 51142 / BH68)</name>
    <name type="common">Cyanothece sp. (strain ATCC 51142)</name>
    <dbReference type="NCBI Taxonomy" id="43989"/>
    <lineage>
        <taxon>Bacteria</taxon>
        <taxon>Bacillati</taxon>
        <taxon>Cyanobacteriota</taxon>
        <taxon>Cyanophyceae</taxon>
        <taxon>Oscillatoriophycideae</taxon>
        <taxon>Chroococcales</taxon>
        <taxon>Aphanothecaceae</taxon>
        <taxon>Crocosphaera</taxon>
        <taxon>Crocosphaera subtropica</taxon>
    </lineage>
</organism>
<sequence>MAKRVQVVLNESINKLGKDGDLVEVAPGYARNYLLPQKLATLATPGILKQVEQRREKERQRLLAEKQQAEGQKTALETIKRFTIRKEVGEGEAIFGTVTTSEVAEAIQAATNQEVDRKGITVPDINKTGFYEATVKLHPEVTATIEIQVAPL</sequence>
<protein>
    <recommendedName>
        <fullName evidence="1">Large ribosomal subunit protein bL9</fullName>
    </recommendedName>
    <alternativeName>
        <fullName evidence="2">50S ribosomal protein L9</fullName>
    </alternativeName>
</protein>
<comment type="function">
    <text evidence="1">Binds to the 23S rRNA.</text>
</comment>
<comment type="similarity">
    <text evidence="1">Belongs to the bacterial ribosomal protein bL9 family.</text>
</comment>
<reference key="1">
    <citation type="journal article" date="2008" name="Proc. Natl. Acad. Sci. U.S.A.">
        <title>The genome of Cyanothece 51142, a unicellular diazotrophic cyanobacterium important in the marine nitrogen cycle.</title>
        <authorList>
            <person name="Welsh E.A."/>
            <person name="Liberton M."/>
            <person name="Stoeckel J."/>
            <person name="Loh T."/>
            <person name="Elvitigala T."/>
            <person name="Wang C."/>
            <person name="Wollam A."/>
            <person name="Fulton R.S."/>
            <person name="Clifton S.W."/>
            <person name="Jacobs J.M."/>
            <person name="Aurora R."/>
            <person name="Ghosh B.K."/>
            <person name="Sherman L.A."/>
            <person name="Smith R.D."/>
            <person name="Wilson R.K."/>
            <person name="Pakrasi H.B."/>
        </authorList>
    </citation>
    <scope>NUCLEOTIDE SEQUENCE [LARGE SCALE GENOMIC DNA]</scope>
    <source>
        <strain>ATCC 51142 / BH68</strain>
    </source>
</reference>
<accession>B1WTN1</accession>
<evidence type="ECO:0000255" key="1">
    <source>
        <dbReference type="HAMAP-Rule" id="MF_00503"/>
    </source>
</evidence>
<evidence type="ECO:0000305" key="2"/>
<dbReference type="EMBL" id="CP000806">
    <property type="protein sequence ID" value="ACB53746.1"/>
    <property type="molecule type" value="Genomic_DNA"/>
</dbReference>
<dbReference type="RefSeq" id="WP_009543546.1">
    <property type="nucleotide sequence ID" value="NC_010546.1"/>
</dbReference>
<dbReference type="SMR" id="B1WTN1"/>
<dbReference type="STRING" id="43989.cce_4398"/>
<dbReference type="KEGG" id="cyt:cce_4398"/>
<dbReference type="eggNOG" id="COG0359">
    <property type="taxonomic scope" value="Bacteria"/>
</dbReference>
<dbReference type="HOGENOM" id="CLU_078938_5_1_3"/>
<dbReference type="OrthoDB" id="9788336at2"/>
<dbReference type="Proteomes" id="UP000001203">
    <property type="component" value="Chromosome circular"/>
</dbReference>
<dbReference type="GO" id="GO:1990904">
    <property type="term" value="C:ribonucleoprotein complex"/>
    <property type="evidence" value="ECO:0007669"/>
    <property type="project" value="UniProtKB-KW"/>
</dbReference>
<dbReference type="GO" id="GO:0005840">
    <property type="term" value="C:ribosome"/>
    <property type="evidence" value="ECO:0007669"/>
    <property type="project" value="UniProtKB-KW"/>
</dbReference>
<dbReference type="GO" id="GO:0019843">
    <property type="term" value="F:rRNA binding"/>
    <property type="evidence" value="ECO:0007669"/>
    <property type="project" value="UniProtKB-UniRule"/>
</dbReference>
<dbReference type="GO" id="GO:0003735">
    <property type="term" value="F:structural constituent of ribosome"/>
    <property type="evidence" value="ECO:0007669"/>
    <property type="project" value="InterPro"/>
</dbReference>
<dbReference type="GO" id="GO:0006412">
    <property type="term" value="P:translation"/>
    <property type="evidence" value="ECO:0007669"/>
    <property type="project" value="UniProtKB-UniRule"/>
</dbReference>
<dbReference type="FunFam" id="3.40.5.10:FF:000003">
    <property type="entry name" value="50S ribosomal protein L9"/>
    <property type="match status" value="1"/>
</dbReference>
<dbReference type="Gene3D" id="3.10.430.100">
    <property type="entry name" value="Ribosomal protein L9, C-terminal domain"/>
    <property type="match status" value="1"/>
</dbReference>
<dbReference type="Gene3D" id="3.40.5.10">
    <property type="entry name" value="Ribosomal protein L9, N-terminal domain"/>
    <property type="match status" value="1"/>
</dbReference>
<dbReference type="HAMAP" id="MF_00503">
    <property type="entry name" value="Ribosomal_bL9"/>
    <property type="match status" value="1"/>
</dbReference>
<dbReference type="InterPro" id="IPR000244">
    <property type="entry name" value="Ribosomal_bL9"/>
</dbReference>
<dbReference type="InterPro" id="IPR009027">
    <property type="entry name" value="Ribosomal_bL9/RNase_H1_N"/>
</dbReference>
<dbReference type="InterPro" id="IPR020594">
    <property type="entry name" value="Ribosomal_bL9_bac/chp"/>
</dbReference>
<dbReference type="InterPro" id="IPR020069">
    <property type="entry name" value="Ribosomal_bL9_C"/>
</dbReference>
<dbReference type="InterPro" id="IPR036791">
    <property type="entry name" value="Ribosomal_bL9_C_sf"/>
</dbReference>
<dbReference type="InterPro" id="IPR020070">
    <property type="entry name" value="Ribosomal_bL9_N"/>
</dbReference>
<dbReference type="InterPro" id="IPR036935">
    <property type="entry name" value="Ribosomal_bL9_N_sf"/>
</dbReference>
<dbReference type="NCBIfam" id="TIGR00158">
    <property type="entry name" value="L9"/>
    <property type="match status" value="1"/>
</dbReference>
<dbReference type="PANTHER" id="PTHR21368">
    <property type="entry name" value="50S RIBOSOMAL PROTEIN L9"/>
    <property type="match status" value="1"/>
</dbReference>
<dbReference type="Pfam" id="PF03948">
    <property type="entry name" value="Ribosomal_L9_C"/>
    <property type="match status" value="1"/>
</dbReference>
<dbReference type="Pfam" id="PF01281">
    <property type="entry name" value="Ribosomal_L9_N"/>
    <property type="match status" value="1"/>
</dbReference>
<dbReference type="SUPFAM" id="SSF55658">
    <property type="entry name" value="L9 N-domain-like"/>
    <property type="match status" value="1"/>
</dbReference>
<dbReference type="SUPFAM" id="SSF55653">
    <property type="entry name" value="Ribosomal protein L9 C-domain"/>
    <property type="match status" value="1"/>
</dbReference>
<dbReference type="PROSITE" id="PS00651">
    <property type="entry name" value="RIBOSOMAL_L9"/>
    <property type="match status" value="1"/>
</dbReference>
<proteinExistence type="inferred from homology"/>
<keyword id="KW-1185">Reference proteome</keyword>
<keyword id="KW-0687">Ribonucleoprotein</keyword>
<keyword id="KW-0689">Ribosomal protein</keyword>
<keyword id="KW-0694">RNA-binding</keyword>
<keyword id="KW-0699">rRNA-binding</keyword>
<feature type="chain" id="PRO_1000196238" description="Large ribosomal subunit protein bL9">
    <location>
        <begin position="1"/>
        <end position="152"/>
    </location>
</feature>